<accession>Q99NA2</accession>
<accession>Q8C1I7</accession>
<organism>
    <name type="scientific">Mus musculus</name>
    <name type="common">Mouse</name>
    <dbReference type="NCBI Taxonomy" id="10090"/>
    <lineage>
        <taxon>Eukaryota</taxon>
        <taxon>Metazoa</taxon>
        <taxon>Chordata</taxon>
        <taxon>Craniata</taxon>
        <taxon>Vertebrata</taxon>
        <taxon>Euteleostomi</taxon>
        <taxon>Mammalia</taxon>
        <taxon>Eutheria</taxon>
        <taxon>Euarchontoglires</taxon>
        <taxon>Glires</taxon>
        <taxon>Rodentia</taxon>
        <taxon>Myomorpha</taxon>
        <taxon>Muroidea</taxon>
        <taxon>Muridae</taxon>
        <taxon>Murinae</taxon>
        <taxon>Mus</taxon>
        <taxon>Mus</taxon>
    </lineage>
</organism>
<dbReference type="EMBL" id="AB046527">
    <property type="protein sequence ID" value="BAC57617.1"/>
    <property type="molecule type" value="mRNA"/>
</dbReference>
<dbReference type="EMBL" id="AB046528">
    <property type="protein sequence ID" value="BAC57618.1"/>
    <property type="molecule type" value="mRNA"/>
</dbReference>
<dbReference type="EMBL" id="AB049066">
    <property type="protein sequence ID" value="BAB39468.1"/>
    <property type="molecule type" value="mRNA"/>
</dbReference>
<dbReference type="EMBL" id="AY349615">
    <property type="protein sequence ID" value="AAQ54689.1"/>
    <property type="molecule type" value="mRNA"/>
</dbReference>
<dbReference type="EMBL" id="BC023684">
    <property type="protein sequence ID" value="AAH23684.1"/>
    <property type="molecule type" value="mRNA"/>
</dbReference>
<dbReference type="EMBL" id="AK016909">
    <property type="protein sequence ID" value="BAC25499.1"/>
    <property type="molecule type" value="mRNA"/>
</dbReference>
<dbReference type="CCDS" id="CCDS39511.1"/>
<dbReference type="RefSeq" id="NP_722473.1">
    <property type="nucleotide sequence ID" value="NM_153778.3"/>
</dbReference>
<dbReference type="SMR" id="Q99NA2"/>
<dbReference type="BioGRID" id="214472">
    <property type="interactions" value="1"/>
</dbReference>
<dbReference type="FunCoup" id="Q99NA2">
    <property type="interactions" value="1309"/>
</dbReference>
<dbReference type="IntAct" id="Q99NA2">
    <property type="interactions" value="1"/>
</dbReference>
<dbReference type="STRING" id="10090.ENSMUSP00000036981"/>
<dbReference type="iPTMnet" id="Q99NA2"/>
<dbReference type="PhosphoSitePlus" id="Q99NA2"/>
<dbReference type="PaxDb" id="10090-ENSMUSP00000036981"/>
<dbReference type="Pumba" id="Q99NA2"/>
<dbReference type="Antibodypedia" id="17011">
    <property type="antibodies" value="132 antibodies from 26 providers"/>
</dbReference>
<dbReference type="DNASU" id="71093"/>
<dbReference type="Ensembl" id="ENSMUST00000042646.8">
    <property type="protein sequence ID" value="ENSMUSP00000036981.8"/>
    <property type="gene ID" value="ENSMUSG00000037621.9"/>
</dbReference>
<dbReference type="GeneID" id="71093"/>
<dbReference type="KEGG" id="mmu:71093"/>
<dbReference type="UCSC" id="uc009cic.2">
    <property type="organism name" value="mouse"/>
</dbReference>
<dbReference type="AGR" id="MGI:1918343"/>
<dbReference type="CTD" id="84913"/>
<dbReference type="MGI" id="MGI:1918343">
    <property type="gene designation" value="Atoh8"/>
</dbReference>
<dbReference type="VEuPathDB" id="HostDB:ENSMUSG00000037621"/>
<dbReference type="eggNOG" id="KOG3898">
    <property type="taxonomic scope" value="Eukaryota"/>
</dbReference>
<dbReference type="GeneTree" id="ENSGT00940000161151"/>
<dbReference type="HOGENOM" id="CLU_057987_0_0_1"/>
<dbReference type="InParanoid" id="Q99NA2"/>
<dbReference type="OMA" id="RSWKPVC"/>
<dbReference type="OrthoDB" id="10001938at2759"/>
<dbReference type="PhylomeDB" id="Q99NA2"/>
<dbReference type="TreeFam" id="TF324848"/>
<dbReference type="BioGRID-ORCS" id="71093">
    <property type="hits" value="0 hits in 76 CRISPR screens"/>
</dbReference>
<dbReference type="ChiTaRS" id="Atoh8">
    <property type="organism name" value="mouse"/>
</dbReference>
<dbReference type="PRO" id="PR:Q99NA2"/>
<dbReference type="Proteomes" id="UP000000589">
    <property type="component" value="Chromosome 6"/>
</dbReference>
<dbReference type="RNAct" id="Q99NA2">
    <property type="molecule type" value="protein"/>
</dbReference>
<dbReference type="Bgee" id="ENSMUSG00000037621">
    <property type="expression patterns" value="Expressed in spermatid and 102 other cell types or tissues"/>
</dbReference>
<dbReference type="ExpressionAtlas" id="Q99NA2">
    <property type="expression patterns" value="baseline and differential"/>
</dbReference>
<dbReference type="GO" id="GO:0005737">
    <property type="term" value="C:cytoplasm"/>
    <property type="evidence" value="ECO:0000314"/>
    <property type="project" value="UniProtKB"/>
</dbReference>
<dbReference type="GO" id="GO:0016607">
    <property type="term" value="C:nuclear speck"/>
    <property type="evidence" value="ECO:0007669"/>
    <property type="project" value="UniProtKB-SubCell"/>
</dbReference>
<dbReference type="GO" id="GO:0005634">
    <property type="term" value="C:nucleus"/>
    <property type="evidence" value="ECO:0000314"/>
    <property type="project" value="UniProtKB"/>
</dbReference>
<dbReference type="GO" id="GO:0003700">
    <property type="term" value="F:DNA-binding transcription factor activity"/>
    <property type="evidence" value="ECO:0000314"/>
    <property type="project" value="UniProtKB"/>
</dbReference>
<dbReference type="GO" id="GO:0140297">
    <property type="term" value="F:DNA-binding transcription factor binding"/>
    <property type="evidence" value="ECO:0000353"/>
    <property type="project" value="UniProtKB"/>
</dbReference>
<dbReference type="GO" id="GO:0070888">
    <property type="term" value="F:E-box binding"/>
    <property type="evidence" value="ECO:0000250"/>
    <property type="project" value="UniProtKB"/>
</dbReference>
<dbReference type="GO" id="GO:0046983">
    <property type="term" value="F:protein dimerization activity"/>
    <property type="evidence" value="ECO:0007669"/>
    <property type="project" value="InterPro"/>
</dbReference>
<dbReference type="GO" id="GO:0008134">
    <property type="term" value="F:transcription factor binding"/>
    <property type="evidence" value="ECO:0000353"/>
    <property type="project" value="UniProtKB"/>
</dbReference>
<dbReference type="GO" id="GO:0030154">
    <property type="term" value="P:cell differentiation"/>
    <property type="evidence" value="ECO:0007669"/>
    <property type="project" value="UniProtKB-KW"/>
</dbReference>
<dbReference type="GO" id="GO:0001704">
    <property type="term" value="P:formation of primary germ layer"/>
    <property type="evidence" value="ECO:0000315"/>
    <property type="project" value="UniProtKB"/>
</dbReference>
<dbReference type="GO" id="GO:0051450">
    <property type="term" value="P:myoblast proliferation"/>
    <property type="evidence" value="ECO:0000314"/>
    <property type="project" value="UniProtKB"/>
</dbReference>
<dbReference type="GO" id="GO:0045892">
    <property type="term" value="P:negative regulation of DNA-templated transcription"/>
    <property type="evidence" value="ECO:0000314"/>
    <property type="project" value="UniProtKB"/>
</dbReference>
<dbReference type="GO" id="GO:0001937">
    <property type="term" value="P:negative regulation of endothelial cell proliferation"/>
    <property type="evidence" value="ECO:0000250"/>
    <property type="project" value="UniProtKB"/>
</dbReference>
<dbReference type="GO" id="GO:0010629">
    <property type="term" value="P:negative regulation of gene expression"/>
    <property type="evidence" value="ECO:0007669"/>
    <property type="project" value="Ensembl"/>
</dbReference>
<dbReference type="GO" id="GO:0007399">
    <property type="term" value="P:nervous system development"/>
    <property type="evidence" value="ECO:0007669"/>
    <property type="project" value="UniProtKB-KW"/>
</dbReference>
<dbReference type="GO" id="GO:0045893">
    <property type="term" value="P:positive regulation of DNA-templated transcription"/>
    <property type="evidence" value="ECO:0000250"/>
    <property type="project" value="UniProtKB"/>
</dbReference>
<dbReference type="GO" id="GO:0045603">
    <property type="term" value="P:positive regulation of endothelial cell differentiation"/>
    <property type="evidence" value="ECO:0000250"/>
    <property type="project" value="UniProtKB"/>
</dbReference>
<dbReference type="GO" id="GO:0010595">
    <property type="term" value="P:positive regulation of endothelial cell migration"/>
    <property type="evidence" value="ECO:0000250"/>
    <property type="project" value="UniProtKB"/>
</dbReference>
<dbReference type="GO" id="GO:1902895">
    <property type="term" value="P:positive regulation of miRNA transcription"/>
    <property type="evidence" value="ECO:0007669"/>
    <property type="project" value="Ensembl"/>
</dbReference>
<dbReference type="GO" id="GO:0060391">
    <property type="term" value="P:positive regulation of SMAD protein signal transduction"/>
    <property type="evidence" value="ECO:0000250"/>
    <property type="project" value="UniProtKB"/>
</dbReference>
<dbReference type="GO" id="GO:0035148">
    <property type="term" value="P:tube formation"/>
    <property type="evidence" value="ECO:0000250"/>
    <property type="project" value="UniProtKB"/>
</dbReference>
<dbReference type="CDD" id="cd11421">
    <property type="entry name" value="bHLH_TS_ATOH8"/>
    <property type="match status" value="1"/>
</dbReference>
<dbReference type="FunFam" id="4.10.280.10:FF:000052">
    <property type="entry name" value="Protein atonal homolog 8"/>
    <property type="match status" value="1"/>
</dbReference>
<dbReference type="Gene3D" id="4.10.280.10">
    <property type="entry name" value="Helix-loop-helix DNA-binding domain"/>
    <property type="match status" value="1"/>
</dbReference>
<dbReference type="InterPro" id="IPR032660">
    <property type="entry name" value="ATOH8_bHLH"/>
</dbReference>
<dbReference type="InterPro" id="IPR011598">
    <property type="entry name" value="bHLH_dom"/>
</dbReference>
<dbReference type="InterPro" id="IPR050359">
    <property type="entry name" value="bHLH_transcription_factors"/>
</dbReference>
<dbReference type="InterPro" id="IPR036638">
    <property type="entry name" value="HLH_DNA-bd_sf"/>
</dbReference>
<dbReference type="PANTHER" id="PTHR19290">
    <property type="entry name" value="BASIC HELIX-LOOP-HELIX PROTEIN NEUROGENIN-RELATED"/>
    <property type="match status" value="1"/>
</dbReference>
<dbReference type="PANTHER" id="PTHR19290:SF102">
    <property type="entry name" value="TRANSCRIPTION FACTOR ATOH8"/>
    <property type="match status" value="1"/>
</dbReference>
<dbReference type="Pfam" id="PF00010">
    <property type="entry name" value="HLH"/>
    <property type="match status" value="1"/>
</dbReference>
<dbReference type="SMART" id="SM00353">
    <property type="entry name" value="HLH"/>
    <property type="match status" value="1"/>
</dbReference>
<dbReference type="SUPFAM" id="SSF47459">
    <property type="entry name" value="HLH, helix-loop-helix DNA-binding domain"/>
    <property type="match status" value="1"/>
</dbReference>
<dbReference type="PROSITE" id="PS50888">
    <property type="entry name" value="BHLH"/>
    <property type="match status" value="1"/>
</dbReference>
<name>ATOH8_MOUSE</name>
<sequence length="322" mass="34785">MKHIPVLEDGPWKTVCVKELNGLKKLKRKGKEPVRRANGYKTFRLDLEAPELGATVSTTAATNGLRDRTQPFPIATPVPASVAPAVPPGGGTDTAREFRGIRAPEVSDARKRGFALGTVGPGLPTPPPPPASQSLAPGDPEAHSFREQALRPRILLCAPPARPTQSAPLAPPAAPQESPVRPAPPTRPGESSYSSISHVIYNNHPDSSASPRKRPGEATAASTEIKALQQTRRLLANARERTRVHTISAAFEALRKQVPCYSYGQKLSKLAILRIACNYILSLARLADLDYSADHSNLSFSECVQRCTRTLQAEGRAKKRKE</sequence>
<keyword id="KW-0963">Cytoplasm</keyword>
<keyword id="KW-0217">Developmental protein</keyword>
<keyword id="KW-0221">Differentiation</keyword>
<keyword id="KW-0238">DNA-binding</keyword>
<keyword id="KW-0524">Neurogenesis</keyword>
<keyword id="KW-0539">Nucleus</keyword>
<keyword id="KW-1185">Reference proteome</keyword>
<keyword id="KW-0804">Transcription</keyword>
<keyword id="KW-0805">Transcription regulation</keyword>
<reference key="1">
    <citation type="submission" date="2000-07" db="EMBL/GenBank/DDBJ databases">
        <title>Okadin, a putative transcription factor cDNA type II.</title>
        <authorList>
            <person name="Yoshida S."/>
            <person name="Okada T."/>
            <person name="Nabeshima Y."/>
        </authorList>
    </citation>
    <scope>NUCLEOTIDE SEQUENCE [MRNA]</scope>
    <source>
        <strain>C57BL/6J</strain>
        <tissue>Cecum</tissue>
    </source>
</reference>
<reference key="2">
    <citation type="journal article" date="2001" name="Genes Cells">
        <title>Math6, a bHLH gene expressed in the developing nervous system, regulates neuronal versus glial differentiation.</title>
        <authorList>
            <person name="Inoue C."/>
            <person name="Bae S.K."/>
            <person name="Takatsuka K."/>
            <person name="Inoue T."/>
            <person name="Bessho Y."/>
            <person name="Kageyama R."/>
        </authorList>
    </citation>
    <scope>NUCLEOTIDE SEQUENCE [MRNA]</scope>
    <scope>TISSUE SPECIFICITY</scope>
    <scope>DEVELOPMENTAL STAGE</scope>
    <scope>FUNCTION</scope>
</reference>
<reference key="3">
    <citation type="journal article" date="2006" name="Dev. Dyn.">
        <title>Math6 expression during kidney development and altered expression in a mouse model of glomerulosclerosis.</title>
        <authorList>
            <person name="Ross M.D."/>
            <person name="Martinka S."/>
            <person name="Mukherjee A."/>
            <person name="Sedor J.R."/>
            <person name="Vinson C."/>
            <person name="Bruggeman L.A."/>
        </authorList>
    </citation>
    <scope>NUCLEOTIDE SEQUENCE [MRNA]</scope>
    <scope>TISSUE SPECIFICITY</scope>
    <scope>DEVELOPMENTAL STAGE</scope>
    <scope>FUNCTION</scope>
    <source>
        <strain>FVB/N</strain>
    </source>
</reference>
<reference key="4">
    <citation type="journal article" date="2004" name="Genome Res.">
        <title>The status, quality, and expansion of the NIH full-length cDNA project: the Mammalian Gene Collection (MGC).</title>
        <authorList>
            <consortium name="The MGC Project Team"/>
        </authorList>
    </citation>
    <scope>NUCLEOTIDE SEQUENCE [LARGE SCALE MRNA]</scope>
    <source>
        <strain>FVB/N</strain>
        <tissue>Mammary tumor</tissue>
    </source>
</reference>
<reference key="5">
    <citation type="journal article" date="2005" name="Science">
        <title>The transcriptional landscape of the mammalian genome.</title>
        <authorList>
            <person name="Carninci P."/>
            <person name="Kasukawa T."/>
            <person name="Katayama S."/>
            <person name="Gough J."/>
            <person name="Frith M.C."/>
            <person name="Maeda N."/>
            <person name="Oyama R."/>
            <person name="Ravasi T."/>
            <person name="Lenhard B."/>
            <person name="Wells C."/>
            <person name="Kodzius R."/>
            <person name="Shimokawa K."/>
            <person name="Bajic V.B."/>
            <person name="Brenner S.E."/>
            <person name="Batalov S."/>
            <person name="Forrest A.R."/>
            <person name="Zavolan M."/>
            <person name="Davis M.J."/>
            <person name="Wilming L.G."/>
            <person name="Aidinis V."/>
            <person name="Allen J.E."/>
            <person name="Ambesi-Impiombato A."/>
            <person name="Apweiler R."/>
            <person name="Aturaliya R.N."/>
            <person name="Bailey T.L."/>
            <person name="Bansal M."/>
            <person name="Baxter L."/>
            <person name="Beisel K.W."/>
            <person name="Bersano T."/>
            <person name="Bono H."/>
            <person name="Chalk A.M."/>
            <person name="Chiu K.P."/>
            <person name="Choudhary V."/>
            <person name="Christoffels A."/>
            <person name="Clutterbuck D.R."/>
            <person name="Crowe M.L."/>
            <person name="Dalla E."/>
            <person name="Dalrymple B.P."/>
            <person name="de Bono B."/>
            <person name="Della Gatta G."/>
            <person name="di Bernardo D."/>
            <person name="Down T."/>
            <person name="Engstrom P."/>
            <person name="Fagiolini M."/>
            <person name="Faulkner G."/>
            <person name="Fletcher C.F."/>
            <person name="Fukushima T."/>
            <person name="Furuno M."/>
            <person name="Futaki S."/>
            <person name="Gariboldi M."/>
            <person name="Georgii-Hemming P."/>
            <person name="Gingeras T.R."/>
            <person name="Gojobori T."/>
            <person name="Green R.E."/>
            <person name="Gustincich S."/>
            <person name="Harbers M."/>
            <person name="Hayashi Y."/>
            <person name="Hensch T.K."/>
            <person name="Hirokawa N."/>
            <person name="Hill D."/>
            <person name="Huminiecki L."/>
            <person name="Iacono M."/>
            <person name="Ikeo K."/>
            <person name="Iwama A."/>
            <person name="Ishikawa T."/>
            <person name="Jakt M."/>
            <person name="Kanapin A."/>
            <person name="Katoh M."/>
            <person name="Kawasawa Y."/>
            <person name="Kelso J."/>
            <person name="Kitamura H."/>
            <person name="Kitano H."/>
            <person name="Kollias G."/>
            <person name="Krishnan S.P."/>
            <person name="Kruger A."/>
            <person name="Kummerfeld S.K."/>
            <person name="Kurochkin I.V."/>
            <person name="Lareau L.F."/>
            <person name="Lazarevic D."/>
            <person name="Lipovich L."/>
            <person name="Liu J."/>
            <person name="Liuni S."/>
            <person name="McWilliam S."/>
            <person name="Madan Babu M."/>
            <person name="Madera M."/>
            <person name="Marchionni L."/>
            <person name="Matsuda H."/>
            <person name="Matsuzawa S."/>
            <person name="Miki H."/>
            <person name="Mignone F."/>
            <person name="Miyake S."/>
            <person name="Morris K."/>
            <person name="Mottagui-Tabar S."/>
            <person name="Mulder N."/>
            <person name="Nakano N."/>
            <person name="Nakauchi H."/>
            <person name="Ng P."/>
            <person name="Nilsson R."/>
            <person name="Nishiguchi S."/>
            <person name="Nishikawa S."/>
            <person name="Nori F."/>
            <person name="Ohara O."/>
            <person name="Okazaki Y."/>
            <person name="Orlando V."/>
            <person name="Pang K.C."/>
            <person name="Pavan W.J."/>
            <person name="Pavesi G."/>
            <person name="Pesole G."/>
            <person name="Petrovsky N."/>
            <person name="Piazza S."/>
            <person name="Reed J."/>
            <person name="Reid J.F."/>
            <person name="Ring B.Z."/>
            <person name="Ringwald M."/>
            <person name="Rost B."/>
            <person name="Ruan Y."/>
            <person name="Salzberg S.L."/>
            <person name="Sandelin A."/>
            <person name="Schneider C."/>
            <person name="Schoenbach C."/>
            <person name="Sekiguchi K."/>
            <person name="Semple C.A."/>
            <person name="Seno S."/>
            <person name="Sessa L."/>
            <person name="Sheng Y."/>
            <person name="Shibata Y."/>
            <person name="Shimada H."/>
            <person name="Shimada K."/>
            <person name="Silva D."/>
            <person name="Sinclair B."/>
            <person name="Sperling S."/>
            <person name="Stupka E."/>
            <person name="Sugiura K."/>
            <person name="Sultana R."/>
            <person name="Takenaka Y."/>
            <person name="Taki K."/>
            <person name="Tammoja K."/>
            <person name="Tan S.L."/>
            <person name="Tang S."/>
            <person name="Taylor M.S."/>
            <person name="Tegner J."/>
            <person name="Teichmann S.A."/>
            <person name="Ueda H.R."/>
            <person name="van Nimwegen E."/>
            <person name="Verardo R."/>
            <person name="Wei C.L."/>
            <person name="Yagi K."/>
            <person name="Yamanishi H."/>
            <person name="Zabarovsky E."/>
            <person name="Zhu S."/>
            <person name="Zimmer A."/>
            <person name="Hide W."/>
            <person name="Bult C."/>
            <person name="Grimmond S.M."/>
            <person name="Teasdale R.D."/>
            <person name="Liu E.T."/>
            <person name="Brusic V."/>
            <person name="Quackenbush J."/>
            <person name="Wahlestedt C."/>
            <person name="Mattick J.S."/>
            <person name="Hume D.A."/>
            <person name="Kai C."/>
            <person name="Sasaki D."/>
            <person name="Tomaru Y."/>
            <person name="Fukuda S."/>
            <person name="Kanamori-Katayama M."/>
            <person name="Suzuki M."/>
            <person name="Aoki J."/>
            <person name="Arakawa T."/>
            <person name="Iida J."/>
            <person name="Imamura K."/>
            <person name="Itoh M."/>
            <person name="Kato T."/>
            <person name="Kawaji H."/>
            <person name="Kawagashira N."/>
            <person name="Kawashima T."/>
            <person name="Kojima M."/>
            <person name="Kondo S."/>
            <person name="Konno H."/>
            <person name="Nakano K."/>
            <person name="Ninomiya N."/>
            <person name="Nishio T."/>
            <person name="Okada M."/>
            <person name="Plessy C."/>
            <person name="Shibata K."/>
            <person name="Shiraki T."/>
            <person name="Suzuki S."/>
            <person name="Tagami M."/>
            <person name="Waki K."/>
            <person name="Watahiki A."/>
            <person name="Okamura-Oho Y."/>
            <person name="Suzuki H."/>
            <person name="Kawai J."/>
            <person name="Hayashizaki Y."/>
        </authorList>
    </citation>
    <scope>NUCLEOTIDE SEQUENCE [LARGE SCALE MRNA] OF 213-322</scope>
    <source>
        <strain>C57BL/6J</strain>
        <tissue>Testis</tissue>
    </source>
</reference>
<reference key="6">
    <citation type="journal article" date="2008" name="PLoS ONE">
        <title>Identification of the bHLH factor Math6 as a novel component of the embryonic pancreas transcriptional network.</title>
        <authorList>
            <person name="Lynn F.C."/>
            <person name="Sanchez L."/>
            <person name="Gomis R."/>
            <person name="German M.S."/>
            <person name="Gasa R."/>
        </authorList>
    </citation>
    <scope>DEVELOPMENTAL STAGE</scope>
    <scope>DISRUPTION PHENOTYPE</scope>
    <scope>INTERACTION WITH NEUROG3 AND NEUROD1</scope>
    <scope>FUNCTION</scope>
    <scope>INDUCTION</scope>
</reference>
<reference key="7">
    <citation type="journal article" date="2013" name="Biochim. Biophys. Acta">
        <title>Characterization of the transcriptional activity of the basic helix-loop-helix (bHLH) transcription factor Atoh8.</title>
        <authorList>
            <person name="Ejarque M."/>
            <person name="Altirriba J."/>
            <person name="Gomis R."/>
            <person name="Gasa R."/>
        </authorList>
    </citation>
    <scope>INTERACTION WITH TCF3</scope>
    <scope>FUNCTION</scope>
    <scope>DOMAIN</scope>
</reference>
<reference key="8">
    <citation type="journal article" date="2013" name="J. Biol. Chem.">
        <title>The transcription factor Atonal homolog 8 regulates Gata4 and Friend of Gata-2 during vertebrate development.</title>
        <authorList>
            <person name="Rawnsley D.R."/>
            <person name="Xiao J."/>
            <person name="Lee J.S."/>
            <person name="Liu X."/>
            <person name="Mericko-Ishizuka P."/>
            <person name="Kumar V."/>
            <person name="He J."/>
            <person name="Basu A."/>
            <person name="Lu M."/>
            <person name="Lynn F.C."/>
            <person name="Pack M."/>
            <person name="Gasa R."/>
            <person name="Kahn M.L."/>
        </authorList>
    </citation>
    <scope>INTERACTION WITH ZFPM2</scope>
    <scope>TISSUE SPECIFICITY</scope>
</reference>
<reference key="9">
    <citation type="journal article" date="2014" name="Histochem. Cell Biol.">
        <title>ATOH8, a regulator of skeletal myogenesis in the hypaxial myotome of the trunk.</title>
        <authorList>
            <person name="Balakrishnan-Renuka A."/>
            <person name="Morosan-Puopolo G."/>
            <person name="Yusuf F."/>
            <person name="Abduelmula A."/>
            <person name="Chen J."/>
            <person name="Zoidl G."/>
            <person name="Philippi S."/>
            <person name="Dai F."/>
            <person name="Brand-Saberi B."/>
        </authorList>
    </citation>
    <scope>SUBCELLULAR LOCATION</scope>
</reference>
<comment type="function">
    <text evidence="2 5 6 7 9">Transcription factor that binds a palindromic (canonical) core consensus DNA sequence 5'-CANNTG- 3' known as an E-box element, possibly as a heterodimer with other bHLH proteins (By similarity). Regulates endothelial cell proliferation, migration and tube-like structures formation (By similarity). Modulates endothelial cell differentiation through NOS3 (By similarity). May be implicated in specification and differentiation of neuronal cell lineages in the brain (PubMed:11733035). May participate in kidney development and may be involved in podocyte differentiation (PubMed:16937370). During early embryonic development is involved in tissue-specific differentiation processes that are dependent on class II bHLH factors and namely modulates the differentiation program initiated by the pro-endocrine factor NEUROG3 (PubMed:18560595). During myogenesis, may play a role during the transition of myoblasts from the proliferative phase to the differentiation phase (PubMed:24186058). Positively regulates HAMP transcription in two ways, firstly by acting directly on the HAMP promoter via E-boxes binding and indirectly through increased phosphorylation of SMAD protein complex (By similarity). Repress NEUROG3-dependent gene activation in a gene-specific manner through at least two mechanisms; requires only either the sequestering of a general partner such as TCF3 through heterodimerization, either also requires binding of the bHLH domain to DNA via a basic motif (PubMed:23938248).</text>
</comment>
<comment type="subunit">
    <text evidence="1 7 8 9">Efficient DNA binding requires dimerization with another bHLH protein. Interacts with NEUROG3 and NEUROD1. Interacts with ZFPM2; mediates indirect interaction with GATA4. Forms a heterodimer with TCF3; repress transcription of TCF3 and TCF3/NEUROG3 dimer-induced transactivation of E box-dependent promoters.</text>
</comment>
<comment type="subcellular location">
    <subcellularLocation>
        <location evidence="10">Nucleus</location>
    </subcellularLocation>
    <subcellularLocation>
        <location evidence="2">Nucleus speckle</location>
    </subcellularLocation>
    <subcellularLocation>
        <location evidence="10">Cytoplasm</location>
    </subcellularLocation>
</comment>
<comment type="tissue specificity">
    <text evidence="5 6 8">Expressed by subsets of mature neurons (PubMed:11733035). Expressed in kidney (podocytes) (PubMed:16937370). Expression is restricted to the atria, lung mesenchyme, and vascular smooth muscle (PubMed:23836893).</text>
</comment>
<comment type="developmental stage">
    <text evidence="5 6 7">Expressed at high levels at 8.5 dpc and its expression level gradually decreases during embryogenesis. At 12.5 dpc, is expressed throughout the developing nervous system. It is expressed in both the ventricular zone and the mantle layer of the developing brain. At 14.5 dpc, expressed in the cortical plate as well as in other regions of the brain. Also expressed at a high level in the spinal cord and dorsal root ganglia. Expressed by almost all cells in the spinal cord and dorsal root ganglia at this stage. At later stages, expression is gradually restricted to several regions such as the hippocampus, cerebellum and retina. In the hippocampus, a high level of expression continues during embryogenesis until adulthood. Expressed in the CA1-CA3 regions and the dentate gyrus. At 18.5 dpc, expressed in cerebellum by Purkinje cells and granule cell precursors in the external granular layer (EGL). By postnatal day 4, expressed by aligned Purkinje cells and by the EGL and internal granular layer (IGL) cells. In the adult cerebellum, expressed at a high level by Purkinje cells and weakly by granule cells in the IGL. In developing retina, expressed in both the ganglion cell layer and the ventricular zone at 11.5 dpc and 17.5 dpc. Expression becomes very weak in the adult retina. Early in metanephric development, expressed in metanephric mesenchyme but not ureteric bud-derived cells, with overall expression being most abundant in the nephrogenic zone. From 14.5 dpc to birth, expressed at constant levels. By day 13, corresponding to the end of new nephron induction, expression levels begin to decline. By day 19, expression returned to fetal levels, and by day 40, the low level of expression that persisted into adulthood is established. In adult kidney, expression is restricted to podocytes. Expressed in pancreatic tissue from 12.5 dpc until 17.5 dpc. Is still detectable at low level,at postnatal day 1 and in isolated pancreatic islets in adult (PubMed:18560595).</text>
</comment>
<comment type="induction">
    <text evidence="7">Specifically activated by bHLH factors.</text>
</comment>
<comment type="domain">
    <text evidence="9">The bHLH domain mediates transcriptional repression by inhibiting TCF3 transcriptional activity through heterodimerization.</text>
</comment>
<comment type="disruption phenotype">
    <text evidence="7">Mice heterozygous survive to adulthood and present no phenotype (PubMed:18560595). The homozygous knockout of Atoh8 is embryonic lethal (PubMed:18560595).</text>
</comment>
<comment type="caution">
    <text evidence="3">Contains a degenerate basic motif not likely to bind DNA.</text>
</comment>
<protein>
    <recommendedName>
        <fullName evidence="13">Transcription factor Atoh8</fullName>
    </recommendedName>
    <alternativeName>
        <fullName evidence="14">Helix-loop-helix protein mATH-6</fullName>
        <shortName evidence="11">mATH6</shortName>
    </alternativeName>
    <alternativeName>
        <fullName evidence="12">Okadin</fullName>
    </alternativeName>
    <alternativeName>
        <fullName evidence="15">Protein atonal homolog 8</fullName>
    </alternativeName>
</protein>
<proteinExistence type="evidence at protein level"/>
<gene>
    <name evidence="15" type="primary">Atoh8</name>
    <name type="synonym">Ath6</name>
</gene>
<evidence type="ECO:0000250" key="1"/>
<evidence type="ECO:0000250" key="2">
    <source>
        <dbReference type="UniProtKB" id="Q96SQ7"/>
    </source>
</evidence>
<evidence type="ECO:0000255" key="3">
    <source>
        <dbReference type="PROSITE-ProRule" id="PRU00981"/>
    </source>
</evidence>
<evidence type="ECO:0000256" key="4">
    <source>
        <dbReference type="SAM" id="MobiDB-lite"/>
    </source>
</evidence>
<evidence type="ECO:0000269" key="5">
    <source>
    </source>
</evidence>
<evidence type="ECO:0000269" key="6">
    <source>
    </source>
</evidence>
<evidence type="ECO:0000269" key="7">
    <source>
    </source>
</evidence>
<evidence type="ECO:0000269" key="8">
    <source>
    </source>
</evidence>
<evidence type="ECO:0000269" key="9">
    <source>
    </source>
</evidence>
<evidence type="ECO:0000269" key="10">
    <source>
    </source>
</evidence>
<evidence type="ECO:0000303" key="11">
    <source>
    </source>
</evidence>
<evidence type="ECO:0000303" key="12">
    <source ref="1"/>
</evidence>
<evidence type="ECO:0000305" key="13"/>
<evidence type="ECO:0000305" key="14">
    <source>
    </source>
</evidence>
<evidence type="ECO:0000312" key="15">
    <source>
        <dbReference type="MGI" id="MGI:1918343"/>
    </source>
</evidence>
<feature type="chain" id="PRO_0000323752" description="Transcription factor Atoh8">
    <location>
        <begin position="1"/>
        <end position="322"/>
    </location>
</feature>
<feature type="domain" description="bHLH" evidence="3">
    <location>
        <begin position="231"/>
        <end position="283"/>
    </location>
</feature>
<feature type="region of interest" description="Disordered" evidence="4">
    <location>
        <begin position="77"/>
        <end position="96"/>
    </location>
</feature>
<feature type="region of interest" description="Disordered" evidence="4">
    <location>
        <begin position="101"/>
        <end position="144"/>
    </location>
</feature>
<feature type="region of interest" description="Disordered" evidence="4">
    <location>
        <begin position="159"/>
        <end position="221"/>
    </location>
</feature>
<feature type="region of interest" description="Basic motif; degenerate" evidence="3">
    <location>
        <begin position="231"/>
        <end position="244"/>
    </location>
</feature>
<feature type="region of interest" description="Helix-loop-helix motif" evidence="3">
    <location>
        <begin position="245"/>
        <end position="283"/>
    </location>
</feature>
<feature type="compositionally biased region" description="Basic and acidic residues" evidence="4">
    <location>
        <begin position="101"/>
        <end position="111"/>
    </location>
</feature>
<feature type="sequence conflict" description="In Ref. 5; BAC25499." evidence="13" ref="5">
    <original>K</original>
    <variation>E</variation>
    <location>
        <position position="213"/>
    </location>
</feature>